<evidence type="ECO:0000250" key="1"/>
<evidence type="ECO:0000255" key="2">
    <source>
        <dbReference type="PROSITE-ProRule" id="PRU10013"/>
    </source>
</evidence>
<evidence type="ECO:0000305" key="3"/>
<keyword id="KW-0349">Heme</keyword>
<keyword id="KW-0376">Hydrogen peroxide</keyword>
<keyword id="KW-0408">Iron</keyword>
<keyword id="KW-0479">Metal-binding</keyword>
<keyword id="KW-0560">Oxidoreductase</keyword>
<keyword id="KW-0575">Peroxidase</keyword>
<protein>
    <recommendedName>
        <fullName>Catalase</fullName>
        <ecNumber>1.11.1.6</ecNumber>
    </recommendedName>
</protein>
<sequence>MGEKNSSKVLTTGFGIPVGDDQNSLTAGNRGPVLMQDVHLLDKLSHFDHERIPERVVHAKGAGAGGYFEVTADVTKYTKAKFLSEIGKRTEVFVRFSTVGGEKGSADSARDPRGFAVKFYTEDGNYDLVGNNTPVFFIRDPLKFPDFIHTQKRNPATNCKDPDMFWDFLSLTPESIHQVTILFSDRGTPATYRNMNGYSSHTYKWYNEKGEYFWVQYHFKTDQGIKNLTLEEAEKIGGSDPDHATRDLYEAIKKGDYPSWTLEMQIMTPEQAEDYRFDIRDITKVWPHGDFPTMKIGKLVLNRNPTNYFAEVEQAAFSPANLVPGIGISPDKMLQGRVFSYHDTHIHRLGPNYNLIPVNAPKYSPENSYQRDGFMRVDANGGSGPNYWPNSFGGPSPDSVYLEPPFGVSGLAARTLYTHPNDDFVQAGNLYRDVMTDYDRENLVGNIVSHLSAAQKRIQLRQTALFFKADRDYGSRVAKGLELDIKEVERLANMTNEERARATER</sequence>
<dbReference type="EC" id="1.11.1.6"/>
<dbReference type="EMBL" id="AJ005939">
    <property type="protein sequence ID" value="CAA06774.1"/>
    <property type="molecule type" value="Genomic_DNA"/>
</dbReference>
<dbReference type="EMBL" id="CP000099">
    <property type="protein sequence ID" value="AAZ69791.1"/>
    <property type="molecule type" value="Genomic_DNA"/>
</dbReference>
<dbReference type="SMR" id="O93662"/>
<dbReference type="STRING" id="269797.Mbar_A0814"/>
<dbReference type="PeroxiBase" id="8411">
    <property type="entry name" value="MbaKat01"/>
</dbReference>
<dbReference type="PaxDb" id="269797-Mbar_A0814"/>
<dbReference type="KEGG" id="mba:Mbar_A0814"/>
<dbReference type="eggNOG" id="arCOG03310">
    <property type="taxonomic scope" value="Archaea"/>
</dbReference>
<dbReference type="HOGENOM" id="CLU_010645_2_0_2"/>
<dbReference type="OrthoDB" id="53102at2157"/>
<dbReference type="BRENDA" id="1.11.1.6">
    <property type="organism ID" value="3250"/>
</dbReference>
<dbReference type="GO" id="GO:0005737">
    <property type="term" value="C:cytoplasm"/>
    <property type="evidence" value="ECO:0007669"/>
    <property type="project" value="TreeGrafter"/>
</dbReference>
<dbReference type="GO" id="GO:0004096">
    <property type="term" value="F:catalase activity"/>
    <property type="evidence" value="ECO:0007669"/>
    <property type="project" value="UniProtKB-EC"/>
</dbReference>
<dbReference type="GO" id="GO:0020037">
    <property type="term" value="F:heme binding"/>
    <property type="evidence" value="ECO:0007669"/>
    <property type="project" value="InterPro"/>
</dbReference>
<dbReference type="GO" id="GO:0046872">
    <property type="term" value="F:metal ion binding"/>
    <property type="evidence" value="ECO:0007669"/>
    <property type="project" value="UniProtKB-KW"/>
</dbReference>
<dbReference type="GO" id="GO:0042744">
    <property type="term" value="P:hydrogen peroxide catabolic process"/>
    <property type="evidence" value="ECO:0007669"/>
    <property type="project" value="UniProtKB-KW"/>
</dbReference>
<dbReference type="GO" id="GO:0042542">
    <property type="term" value="P:response to hydrogen peroxide"/>
    <property type="evidence" value="ECO:0007669"/>
    <property type="project" value="TreeGrafter"/>
</dbReference>
<dbReference type="CDD" id="cd08156">
    <property type="entry name" value="catalase_clade_3"/>
    <property type="match status" value="1"/>
</dbReference>
<dbReference type="FunFam" id="2.40.180.10:FF:000001">
    <property type="entry name" value="Catalase"/>
    <property type="match status" value="1"/>
</dbReference>
<dbReference type="Gene3D" id="2.40.180.10">
    <property type="entry name" value="Catalase core domain"/>
    <property type="match status" value="1"/>
</dbReference>
<dbReference type="InterPro" id="IPR018028">
    <property type="entry name" value="Catalase"/>
</dbReference>
<dbReference type="InterPro" id="IPR040333">
    <property type="entry name" value="Catalase_3"/>
</dbReference>
<dbReference type="InterPro" id="IPR024708">
    <property type="entry name" value="Catalase_AS"/>
</dbReference>
<dbReference type="InterPro" id="IPR024711">
    <property type="entry name" value="Catalase_clade1/3"/>
</dbReference>
<dbReference type="InterPro" id="IPR011614">
    <property type="entry name" value="Catalase_core"/>
</dbReference>
<dbReference type="InterPro" id="IPR002226">
    <property type="entry name" value="Catalase_haem_BS"/>
</dbReference>
<dbReference type="InterPro" id="IPR010582">
    <property type="entry name" value="Catalase_immune_responsive"/>
</dbReference>
<dbReference type="InterPro" id="IPR020835">
    <property type="entry name" value="Catalase_sf"/>
</dbReference>
<dbReference type="PANTHER" id="PTHR11465">
    <property type="entry name" value="CATALASE"/>
    <property type="match status" value="1"/>
</dbReference>
<dbReference type="PANTHER" id="PTHR11465:SF9">
    <property type="entry name" value="CATALASE"/>
    <property type="match status" value="1"/>
</dbReference>
<dbReference type="Pfam" id="PF00199">
    <property type="entry name" value="Catalase"/>
    <property type="match status" value="1"/>
</dbReference>
<dbReference type="Pfam" id="PF06628">
    <property type="entry name" value="Catalase-rel"/>
    <property type="match status" value="1"/>
</dbReference>
<dbReference type="PIRSF" id="PIRSF038928">
    <property type="entry name" value="Catalase_clade1-3"/>
    <property type="match status" value="1"/>
</dbReference>
<dbReference type="PRINTS" id="PR00067">
    <property type="entry name" value="CATALASE"/>
</dbReference>
<dbReference type="SMART" id="SM01060">
    <property type="entry name" value="Catalase"/>
    <property type="match status" value="1"/>
</dbReference>
<dbReference type="SUPFAM" id="SSF56634">
    <property type="entry name" value="Heme-dependent catalase-like"/>
    <property type="match status" value="1"/>
</dbReference>
<dbReference type="PROSITE" id="PS00437">
    <property type="entry name" value="CATALASE_1"/>
    <property type="match status" value="1"/>
</dbReference>
<dbReference type="PROSITE" id="PS00438">
    <property type="entry name" value="CATALASE_2"/>
    <property type="match status" value="1"/>
</dbReference>
<dbReference type="PROSITE" id="PS51402">
    <property type="entry name" value="CATALASE_3"/>
    <property type="match status" value="1"/>
</dbReference>
<feature type="chain" id="PRO_0000085019" description="Catalase">
    <location>
        <begin position="1"/>
        <end position="505"/>
    </location>
</feature>
<feature type="active site" evidence="2">
    <location>
        <position position="58"/>
    </location>
</feature>
<feature type="active site" evidence="2">
    <location>
        <position position="131"/>
    </location>
</feature>
<feature type="binding site" description="axial binding residue" evidence="1">
    <location>
        <position position="341"/>
    </location>
    <ligand>
        <name>heme</name>
        <dbReference type="ChEBI" id="CHEBI:30413"/>
    </ligand>
    <ligandPart>
        <name>Fe</name>
        <dbReference type="ChEBI" id="CHEBI:18248"/>
    </ligandPart>
</feature>
<reference key="1">
    <citation type="journal article" date="1999" name="Arch. Microbiol.">
        <title>Purification, characterization, and primary structure of a monofunctional catalase from Methanosarcina barkeri.</title>
        <authorList>
            <person name="Shima S."/>
            <person name="Netrusov A."/>
            <person name="Sordel M."/>
            <person name="Wicke M."/>
            <person name="Hartmann G.C."/>
            <person name="Thauer R.K."/>
        </authorList>
    </citation>
    <scope>NUCLEOTIDE SEQUENCE [GENOMIC DNA]</scope>
</reference>
<reference key="2">
    <citation type="journal article" date="2006" name="J. Bacteriol.">
        <title>The Methanosarcina barkeri genome: comparative analysis with Methanosarcina acetivorans and Methanosarcina mazei reveals extensive rearrangement within methanosarcinal genomes.</title>
        <authorList>
            <person name="Maeder D.L."/>
            <person name="Anderson I."/>
            <person name="Brettin T.S."/>
            <person name="Bruce D.C."/>
            <person name="Gilna P."/>
            <person name="Han C.S."/>
            <person name="Lapidus A."/>
            <person name="Metcalf W.W."/>
            <person name="Saunders E."/>
            <person name="Tapia R."/>
            <person name="Sowers K.R."/>
        </authorList>
    </citation>
    <scope>NUCLEOTIDE SEQUENCE [LARGE SCALE GENOMIC DNA]</scope>
    <source>
        <strain>Fusaro / DSM 804</strain>
    </source>
</reference>
<proteinExistence type="inferred from homology"/>
<comment type="function">
    <text>Decomposes hydrogen peroxide into water and oxygen; serves to protect cells from the toxic effects of hydrogen peroxide.</text>
</comment>
<comment type="catalytic activity">
    <reaction evidence="2">
        <text>2 H2O2 = O2 + 2 H2O</text>
        <dbReference type="Rhea" id="RHEA:20309"/>
        <dbReference type="ChEBI" id="CHEBI:15377"/>
        <dbReference type="ChEBI" id="CHEBI:15379"/>
        <dbReference type="ChEBI" id="CHEBI:16240"/>
        <dbReference type="EC" id="1.11.1.6"/>
    </reaction>
</comment>
<comment type="cofactor">
    <cofactor evidence="1">
        <name>heme</name>
        <dbReference type="ChEBI" id="CHEBI:30413"/>
    </cofactor>
</comment>
<comment type="similarity">
    <text evidence="3">Belongs to the catalase family.</text>
</comment>
<organism>
    <name type="scientific">Methanosarcina barkeri (strain Fusaro / DSM 804)</name>
    <dbReference type="NCBI Taxonomy" id="269797"/>
    <lineage>
        <taxon>Archaea</taxon>
        <taxon>Methanobacteriati</taxon>
        <taxon>Methanobacteriota</taxon>
        <taxon>Stenosarchaea group</taxon>
        <taxon>Methanomicrobia</taxon>
        <taxon>Methanosarcinales</taxon>
        <taxon>Methanosarcinaceae</taxon>
        <taxon>Methanosarcina</taxon>
    </lineage>
</organism>
<gene>
    <name type="primary">kat</name>
    <name type="ordered locus">Mbar_A0814</name>
</gene>
<name>CATA_METBF</name>
<accession>O93662</accession>
<accession>Q46EA1</accession>